<evidence type="ECO:0000255" key="1"/>
<evidence type="ECO:0000305" key="2"/>
<protein>
    <recommendedName>
        <fullName>Transmembrane protein 254</fullName>
    </recommendedName>
</protein>
<dbReference type="EMBL" id="BC114852">
    <property type="protein sequence ID" value="AAI14853.1"/>
    <property type="molecule type" value="mRNA"/>
</dbReference>
<dbReference type="RefSeq" id="NP_001068696.1">
    <property type="nucleotide sequence ID" value="NM_001075228.2"/>
</dbReference>
<dbReference type="FunCoup" id="Q0D2G3">
    <property type="interactions" value="340"/>
</dbReference>
<dbReference type="STRING" id="9913.ENSBTAP00000002166"/>
<dbReference type="PaxDb" id="9913-ENSBTAP00000002166"/>
<dbReference type="Ensembl" id="ENSBTAT00000002166.6">
    <property type="protein sequence ID" value="ENSBTAP00000002166.5"/>
    <property type="gene ID" value="ENSBTAG00000001656.7"/>
</dbReference>
<dbReference type="GeneID" id="505854"/>
<dbReference type="KEGG" id="bta:505854"/>
<dbReference type="CTD" id="80195"/>
<dbReference type="VEuPathDB" id="HostDB:ENSBTAG00000001656"/>
<dbReference type="VGNC" id="VGNC:36063">
    <property type="gene designation" value="TMEM254"/>
</dbReference>
<dbReference type="eggNOG" id="ENOG502S4F5">
    <property type="taxonomic scope" value="Eukaryota"/>
</dbReference>
<dbReference type="GeneTree" id="ENSGT00390000016042"/>
<dbReference type="HOGENOM" id="CLU_150378_0_0_1"/>
<dbReference type="InParanoid" id="Q0D2G3"/>
<dbReference type="OMA" id="FHWFIQT"/>
<dbReference type="OrthoDB" id="9984821at2759"/>
<dbReference type="TreeFam" id="TF328617"/>
<dbReference type="Proteomes" id="UP000009136">
    <property type="component" value="Chromosome 28"/>
</dbReference>
<dbReference type="Bgee" id="ENSBTAG00000001656">
    <property type="expression patterns" value="Expressed in diaphragm and 104 other cell types or tissues"/>
</dbReference>
<dbReference type="GO" id="GO:0016020">
    <property type="term" value="C:membrane"/>
    <property type="evidence" value="ECO:0007669"/>
    <property type="project" value="UniProtKB-SubCell"/>
</dbReference>
<dbReference type="InterPro" id="IPR028110">
    <property type="entry name" value="TMEM254"/>
</dbReference>
<dbReference type="PANTHER" id="PTHR34104">
    <property type="entry name" value="TRANSMEMBRANE PROTEIN 254"/>
    <property type="match status" value="1"/>
</dbReference>
<dbReference type="PANTHER" id="PTHR34104:SF3">
    <property type="entry name" value="TRANSMEMBRANE PROTEIN 254"/>
    <property type="match status" value="1"/>
</dbReference>
<dbReference type="Pfam" id="PF14934">
    <property type="entry name" value="TMEM254"/>
    <property type="match status" value="1"/>
</dbReference>
<feature type="chain" id="PRO_0000271443" description="Transmembrane protein 254">
    <location>
        <begin position="1"/>
        <end position="124"/>
    </location>
</feature>
<feature type="transmembrane region" description="Helical" evidence="1">
    <location>
        <begin position="16"/>
        <end position="36"/>
    </location>
</feature>
<feature type="transmembrane region" description="Helical" evidence="1">
    <location>
        <begin position="62"/>
        <end position="82"/>
    </location>
</feature>
<feature type="transmembrane region" description="Helical" evidence="1">
    <location>
        <begin position="96"/>
        <end position="116"/>
    </location>
</feature>
<comment type="subcellular location">
    <subcellularLocation>
        <location evidence="2">Membrane</location>
        <topology evidence="2">Multi-pass membrane protein</topology>
    </subcellularLocation>
</comment>
<proteinExistence type="evidence at transcript level"/>
<accession>Q0D2G3</accession>
<name>TM254_BOVIN</name>
<sequence length="124" mass="14724">MGKARGDEAYFQRSSLFWVTIIILSFGYYTWVIFWPESIPYQSLGPLGPFTQYLLKHHHTLVHAWYWLAWMIHVGESLYAIVLCKSKGITNTWTQLLWFLQTFLFGLASLYYLIAFRPKHQKQT</sequence>
<organism>
    <name type="scientific">Bos taurus</name>
    <name type="common">Bovine</name>
    <dbReference type="NCBI Taxonomy" id="9913"/>
    <lineage>
        <taxon>Eukaryota</taxon>
        <taxon>Metazoa</taxon>
        <taxon>Chordata</taxon>
        <taxon>Craniata</taxon>
        <taxon>Vertebrata</taxon>
        <taxon>Euteleostomi</taxon>
        <taxon>Mammalia</taxon>
        <taxon>Eutheria</taxon>
        <taxon>Laurasiatheria</taxon>
        <taxon>Artiodactyla</taxon>
        <taxon>Ruminantia</taxon>
        <taxon>Pecora</taxon>
        <taxon>Bovidae</taxon>
        <taxon>Bovinae</taxon>
        <taxon>Bos</taxon>
    </lineage>
</organism>
<keyword id="KW-0472">Membrane</keyword>
<keyword id="KW-1185">Reference proteome</keyword>
<keyword id="KW-0812">Transmembrane</keyword>
<keyword id="KW-1133">Transmembrane helix</keyword>
<reference key="1">
    <citation type="submission" date="2006-04" db="EMBL/GenBank/DDBJ databases">
        <authorList>
            <consortium name="NIH - Mammalian Gene Collection (MGC) project"/>
        </authorList>
    </citation>
    <scope>NUCLEOTIDE SEQUENCE [LARGE SCALE MRNA]</scope>
    <source>
        <strain>Hereford</strain>
        <tissue>Hypothalamus</tissue>
    </source>
</reference>
<gene>
    <name type="primary">TMEM254</name>
</gene>